<comment type="function">
    <text evidence="6 7">Component of the chloroplast ribosome (chloro-ribosome), a dedicated translation machinery responsible for the synthesis of chloroplast genome-encoded proteins, including proteins of the transcription and translation machinery and components of the photosynthetic apparatus.</text>
</comment>
<comment type="subunit">
    <text evidence="2 3">Component of the chloroplast large ribosomal subunit (LSU). Mature 70S chloroplast ribosomes of higher plants consist of a small (30S) and a large (50S) subunit. The 30S small subunit contains 1 molecule of ribosomal RNA (16S rRNA) and 24 different proteins. The 50S large subunit contains 3 rRNA molecules (23S, 5S and 4.5S rRNA) and 33 different proteins.</text>
</comment>
<comment type="subcellular location">
    <subcellularLocation>
        <location evidence="2 3">Plastid</location>
        <location evidence="2 3">Chloroplast</location>
    </subcellularLocation>
</comment>
<comment type="mass spectrometry"/>
<comment type="similarity">
    <text evidence="1">Belongs to the bacterial ribosomal protein bL17 family.</text>
</comment>
<proteinExistence type="evidence at protein level"/>
<evidence type="ECO:0000255" key="1"/>
<evidence type="ECO:0000269" key="2">
    <source>
    </source>
</evidence>
<evidence type="ECO:0000269" key="3">
    <source>
    </source>
</evidence>
<evidence type="ECO:0000303" key="4">
    <source>
    </source>
</evidence>
<evidence type="ECO:0000303" key="5">
    <source>
    </source>
</evidence>
<evidence type="ECO:0000305" key="6">
    <source>
    </source>
</evidence>
<evidence type="ECO:0000305" key="7">
    <source>
    </source>
</evidence>
<evidence type="ECO:0007829" key="8">
    <source>
        <dbReference type="PDB" id="5H1S"/>
    </source>
</evidence>
<evidence type="ECO:0007829" key="9">
    <source>
        <dbReference type="PDB" id="5MMI"/>
    </source>
</evidence>
<feature type="transit peptide" description="Chloroplast" evidence="2">
    <location>
        <begin position="1"/>
        <end position="10"/>
    </location>
</feature>
<feature type="chain" id="PRO_0000249230" description="Large ribosomal subunit protein bL17c">
    <location>
        <begin position="11"/>
        <end position="126"/>
    </location>
</feature>
<feature type="helix" evidence="9">
    <location>
        <begin position="24"/>
        <end position="41"/>
    </location>
</feature>
<feature type="strand" evidence="9">
    <location>
        <begin position="42"/>
        <end position="47"/>
    </location>
</feature>
<feature type="helix" evidence="9">
    <location>
        <begin position="48"/>
        <end position="67"/>
    </location>
</feature>
<feature type="helix" evidence="9">
    <location>
        <begin position="70"/>
        <end position="77"/>
    </location>
</feature>
<feature type="helix" evidence="9">
    <location>
        <begin position="83"/>
        <end position="96"/>
    </location>
</feature>
<feature type="turn" evidence="8">
    <location>
        <begin position="97"/>
        <end position="100"/>
    </location>
</feature>
<feature type="strand" evidence="9">
    <location>
        <begin position="105"/>
        <end position="110"/>
    </location>
</feature>
<feature type="turn" evidence="9">
    <location>
        <begin position="114"/>
        <end position="116"/>
    </location>
</feature>
<feature type="strand" evidence="9">
    <location>
        <begin position="120"/>
        <end position="125"/>
    </location>
</feature>
<keyword id="KW-0002">3D-structure</keyword>
<keyword id="KW-0150">Chloroplast</keyword>
<keyword id="KW-0903">Direct protein sequencing</keyword>
<keyword id="KW-0934">Plastid</keyword>
<keyword id="KW-1185">Reference proteome</keyword>
<keyword id="KW-0687">Ribonucleoprotein</keyword>
<keyword id="KW-0689">Ribosomal protein</keyword>
<keyword id="KW-0694">RNA-binding</keyword>
<keyword id="KW-0699">rRNA-binding</keyword>
<keyword id="KW-0809">Transit peptide</keyword>
<gene>
    <name type="primary">RPL17</name>
    <name type="ORF">SOVF_059230</name>
</gene>
<organism>
    <name type="scientific">Spinacia oleracea</name>
    <name type="common">Spinach</name>
    <dbReference type="NCBI Taxonomy" id="3562"/>
    <lineage>
        <taxon>Eukaryota</taxon>
        <taxon>Viridiplantae</taxon>
        <taxon>Streptophyta</taxon>
        <taxon>Embryophyta</taxon>
        <taxon>Tracheophyta</taxon>
        <taxon>Spermatophyta</taxon>
        <taxon>Magnoliopsida</taxon>
        <taxon>eudicotyledons</taxon>
        <taxon>Gunneridae</taxon>
        <taxon>Pentapetalae</taxon>
        <taxon>Caryophyllales</taxon>
        <taxon>Chenopodiaceae</taxon>
        <taxon>Chenopodioideae</taxon>
        <taxon>Anserineae</taxon>
        <taxon>Spinacia</taxon>
    </lineage>
</organism>
<reference key="1">
    <citation type="journal article" date="2014" name="Nature">
        <title>The genome of the recently domesticated crop plant sugar beet (Beta vulgaris).</title>
        <authorList>
            <person name="Dohm J.C."/>
            <person name="Minoche A.E."/>
            <person name="Holtgraewe D."/>
            <person name="Capella-Gutierrez S."/>
            <person name="Zakrzewski F."/>
            <person name="Tafer H."/>
            <person name="Rupp O."/>
            <person name="Soerensen T.R."/>
            <person name="Stracke R."/>
            <person name="Reinhardt R."/>
            <person name="Goesmann A."/>
            <person name="Kraft T."/>
            <person name="Schulz B."/>
            <person name="Stadler P.F."/>
            <person name="Schmidt T."/>
            <person name="Gabaldon T."/>
            <person name="Lehrach H."/>
            <person name="Weisshaar B."/>
            <person name="Himmelbauer H."/>
        </authorList>
    </citation>
    <scope>NUCLEOTIDE SEQUENCE [LARGE SCALE GENOMIC DNA]</scope>
    <source>
        <strain>cv. Viroflay</strain>
        <tissue>Leaf</tissue>
    </source>
</reference>
<reference key="2">
    <citation type="journal article" date="2000" name="J. Biol. Chem.">
        <title>The plastid ribosomal proteins. Identification of all the proteins in the 50S subunit of an organelle ribosome (chloroplast).</title>
        <authorList>
            <person name="Yamaguchi K."/>
            <person name="Subramanian A.R."/>
        </authorList>
    </citation>
    <scope>PROTEIN SEQUENCE OF 11-32</scope>
    <scope>SUBUNIT</scope>
    <scope>SUBCELLULAR LOCATION</scope>
    <scope>MASS SPECTROMETRY</scope>
    <source>
        <strain>cv. Alwaro</strain>
        <tissue>Leaf</tissue>
    </source>
</reference>
<reference key="3">
    <citation type="journal article" date="2007" name="Proc. Natl. Acad. Sci. U.S.A.">
        <title>Cryo-EM study of the spinach chloroplast ribosome reveals the structural and functional roles of plastid-specific ribosomal proteins.</title>
        <authorList>
            <person name="Sharma M.R."/>
            <person name="Wilson D.N."/>
            <person name="Datta P.P."/>
            <person name="Barat C."/>
            <person name="Schluenzen F."/>
            <person name="Fucini P."/>
            <person name="Agrawal R.K."/>
        </authorList>
    </citation>
    <scope>STRUCTURE BY ELECTRON MICROSCOPY (9.4 ANGSTROMS)</scope>
</reference>
<reference key="4">
    <citation type="journal article" date="2016" name="Sci. Rep.">
        <title>Cryo-EM structure of the large subunit of the spinach chloroplast ribosome.</title>
        <authorList>
            <person name="Ahmed T."/>
            <person name="Yin Z."/>
            <person name="Bhushan S."/>
        </authorList>
    </citation>
    <scope>STRUCTURE BY ELECTRON MICROSCOPY (3.50 ANGSTROMS)</scope>
</reference>
<reference key="5">
    <citation type="journal article" date="2017" name="EMBO J.">
        <title>The complete structure of the chloroplast 70S ribosome in complex with translation factor pY.</title>
        <authorList>
            <person name="Bieri P."/>
            <person name="Leibundgut M."/>
            <person name="Saurer M."/>
            <person name="Boehringer D."/>
            <person name="Ban N."/>
        </authorList>
    </citation>
    <scope>STRUCTURE BY ELECTRON MICROSCOPY (3.25 ANGSTROMS)</scope>
    <scope>SUBUNIT</scope>
    <scope>SUBCELLULAR LOCATION</scope>
</reference>
<accession>P82194</accession>
<accession>A0A0K9RLJ4</accession>
<name>RK17_SPIOL</name>
<dbReference type="EMBL" id="KQ140075">
    <property type="protein sequence ID" value="KNA19692.1"/>
    <property type="molecule type" value="Genomic_DNA"/>
</dbReference>
<dbReference type="PDB" id="4V61">
    <property type="method" value="EM"/>
    <property type="resolution" value="9.40 A"/>
    <property type="chains" value="P=23-32"/>
</dbReference>
<dbReference type="PDB" id="5H1S">
    <property type="method" value="EM"/>
    <property type="resolution" value="3.50 A"/>
    <property type="chains" value="P=11-126"/>
</dbReference>
<dbReference type="PDB" id="5MLC">
    <property type="method" value="EM"/>
    <property type="resolution" value="3.90 A"/>
    <property type="chains" value="P=1-126"/>
</dbReference>
<dbReference type="PDB" id="5MMI">
    <property type="method" value="EM"/>
    <property type="resolution" value="3.25 A"/>
    <property type="chains" value="O=1-126"/>
</dbReference>
<dbReference type="PDB" id="5MMM">
    <property type="method" value="EM"/>
    <property type="resolution" value="3.40 A"/>
    <property type="chains" value="O=1-126"/>
</dbReference>
<dbReference type="PDB" id="5X8P">
    <property type="method" value="EM"/>
    <property type="resolution" value="3.40 A"/>
    <property type="chains" value="O=11-126"/>
</dbReference>
<dbReference type="PDB" id="5X8T">
    <property type="method" value="EM"/>
    <property type="resolution" value="3.30 A"/>
    <property type="chains" value="O=11-126"/>
</dbReference>
<dbReference type="PDB" id="6ERI">
    <property type="method" value="EM"/>
    <property type="resolution" value="3.00 A"/>
    <property type="chains" value="AN=11-126"/>
</dbReference>
<dbReference type="PDBsum" id="4V61"/>
<dbReference type="PDBsum" id="5H1S"/>
<dbReference type="PDBsum" id="5MLC"/>
<dbReference type="PDBsum" id="5MMI"/>
<dbReference type="PDBsum" id="5MMM"/>
<dbReference type="PDBsum" id="5X8P"/>
<dbReference type="PDBsum" id="5X8T"/>
<dbReference type="PDBsum" id="6ERI"/>
<dbReference type="EMDB" id="EMD-3525"/>
<dbReference type="EMDB" id="EMD-3531"/>
<dbReference type="EMDB" id="EMD-3533"/>
<dbReference type="EMDB" id="EMD-3941"/>
<dbReference type="EMDB" id="EMD-6709"/>
<dbReference type="EMDB" id="EMD-6711"/>
<dbReference type="EMDB" id="EMD-9572"/>
<dbReference type="SMR" id="P82194"/>
<dbReference type="IntAct" id="P82194">
    <property type="interactions" value="1"/>
</dbReference>
<dbReference type="STRING" id="3562.P82194"/>
<dbReference type="Proteomes" id="UP001155700">
    <property type="component" value="Unplaced"/>
</dbReference>
<dbReference type="GO" id="GO:0009507">
    <property type="term" value="C:chloroplast"/>
    <property type="evidence" value="ECO:0007669"/>
    <property type="project" value="UniProtKB-SubCell"/>
</dbReference>
<dbReference type="GO" id="GO:0022625">
    <property type="term" value="C:cytosolic large ribosomal subunit"/>
    <property type="evidence" value="ECO:0000318"/>
    <property type="project" value="GO_Central"/>
</dbReference>
<dbReference type="GO" id="GO:0019843">
    <property type="term" value="F:rRNA binding"/>
    <property type="evidence" value="ECO:0007669"/>
    <property type="project" value="UniProtKB-KW"/>
</dbReference>
<dbReference type="GO" id="GO:0003735">
    <property type="term" value="F:structural constituent of ribosome"/>
    <property type="evidence" value="ECO:0000318"/>
    <property type="project" value="GO_Central"/>
</dbReference>
<dbReference type="GO" id="GO:0006412">
    <property type="term" value="P:translation"/>
    <property type="evidence" value="ECO:0007669"/>
    <property type="project" value="InterPro"/>
</dbReference>
<dbReference type="FunFam" id="3.90.1030.10:FF:000001">
    <property type="entry name" value="50S ribosomal protein L17"/>
    <property type="match status" value="1"/>
</dbReference>
<dbReference type="Gene3D" id="3.90.1030.10">
    <property type="entry name" value="Ribosomal protein L17"/>
    <property type="match status" value="1"/>
</dbReference>
<dbReference type="HAMAP" id="MF_01368">
    <property type="entry name" value="Ribosomal_bL17"/>
    <property type="match status" value="1"/>
</dbReference>
<dbReference type="InterPro" id="IPR000456">
    <property type="entry name" value="Ribosomal_bL17"/>
</dbReference>
<dbReference type="InterPro" id="IPR036373">
    <property type="entry name" value="Ribosomal_bL17_sf"/>
</dbReference>
<dbReference type="NCBIfam" id="TIGR00059">
    <property type="entry name" value="L17"/>
    <property type="match status" value="1"/>
</dbReference>
<dbReference type="PANTHER" id="PTHR14413:SF16">
    <property type="entry name" value="LARGE RIBOSOMAL SUBUNIT PROTEIN BL17M"/>
    <property type="match status" value="1"/>
</dbReference>
<dbReference type="PANTHER" id="PTHR14413">
    <property type="entry name" value="RIBOSOMAL PROTEIN L17"/>
    <property type="match status" value="1"/>
</dbReference>
<dbReference type="Pfam" id="PF01196">
    <property type="entry name" value="Ribosomal_L17"/>
    <property type="match status" value="1"/>
</dbReference>
<dbReference type="SUPFAM" id="SSF64263">
    <property type="entry name" value="Prokaryotic ribosomal protein L17"/>
    <property type="match status" value="1"/>
</dbReference>
<protein>
    <recommendedName>
        <fullName evidence="5">Large ribosomal subunit protein bL17c</fullName>
    </recommendedName>
    <alternativeName>
        <fullName evidence="4">50S ribosomal protein L17, chloroplastic</fullName>
    </alternativeName>
    <alternativeName>
        <fullName>CL17</fullName>
    </alternativeName>
</protein>
<sequence>MIDNGGRFFAMKHGRKIHRLSRPADQRRALLRGLTTQLLKHGRIKTTRAKASAMRKYVDKMITLAKEGSLHKRRQALGFIYEKQIVHALFAEVPERYGDRNGGYTRIIRTLPRRGDNAPMAYIELV</sequence>